<gene>
    <name evidence="1" type="primary">ligA</name>
    <name type="ordered locus">THA_1772</name>
</gene>
<name>DNLJ_THEAB</name>
<reference key="1">
    <citation type="journal article" date="2009" name="J. Bacteriol.">
        <title>The genome of Thermosipho africanus TCF52B: lateral genetic connections to the Firmicutes and Archaea.</title>
        <authorList>
            <person name="Nesboe C.L."/>
            <person name="Bapteste E."/>
            <person name="Curtis B."/>
            <person name="Dahle H."/>
            <person name="Lopez P."/>
            <person name="Macleod D."/>
            <person name="Dlutek M."/>
            <person name="Bowman S."/>
            <person name="Zhaxybayeva O."/>
            <person name="Birkeland N.-K."/>
            <person name="Doolittle W.F."/>
        </authorList>
    </citation>
    <scope>NUCLEOTIDE SEQUENCE [LARGE SCALE GENOMIC DNA]</scope>
    <source>
        <strain>TCF52B</strain>
    </source>
</reference>
<organism>
    <name type="scientific">Thermosipho africanus (strain TCF52B)</name>
    <dbReference type="NCBI Taxonomy" id="484019"/>
    <lineage>
        <taxon>Bacteria</taxon>
        <taxon>Thermotogati</taxon>
        <taxon>Thermotogota</taxon>
        <taxon>Thermotogae</taxon>
        <taxon>Thermotogales</taxon>
        <taxon>Fervidobacteriaceae</taxon>
        <taxon>Thermosipho</taxon>
    </lineage>
</organism>
<dbReference type="EC" id="6.5.1.2" evidence="1"/>
<dbReference type="EMBL" id="CP001185">
    <property type="protein sequence ID" value="ACJ76203.1"/>
    <property type="molecule type" value="Genomic_DNA"/>
</dbReference>
<dbReference type="RefSeq" id="WP_012580400.1">
    <property type="nucleotide sequence ID" value="NC_011653.1"/>
</dbReference>
<dbReference type="SMR" id="B7IDX6"/>
<dbReference type="STRING" id="484019.THA_1772"/>
<dbReference type="KEGG" id="taf:THA_1772"/>
<dbReference type="eggNOG" id="COG0272">
    <property type="taxonomic scope" value="Bacteria"/>
</dbReference>
<dbReference type="HOGENOM" id="CLU_007764_2_1_0"/>
<dbReference type="OrthoDB" id="9759736at2"/>
<dbReference type="Proteomes" id="UP000002453">
    <property type="component" value="Chromosome"/>
</dbReference>
<dbReference type="GO" id="GO:0003677">
    <property type="term" value="F:DNA binding"/>
    <property type="evidence" value="ECO:0007669"/>
    <property type="project" value="InterPro"/>
</dbReference>
<dbReference type="GO" id="GO:0003911">
    <property type="term" value="F:DNA ligase (NAD+) activity"/>
    <property type="evidence" value="ECO:0007669"/>
    <property type="project" value="UniProtKB-UniRule"/>
</dbReference>
<dbReference type="GO" id="GO:0046872">
    <property type="term" value="F:metal ion binding"/>
    <property type="evidence" value="ECO:0007669"/>
    <property type="project" value="UniProtKB-KW"/>
</dbReference>
<dbReference type="GO" id="GO:0006281">
    <property type="term" value="P:DNA repair"/>
    <property type="evidence" value="ECO:0007669"/>
    <property type="project" value="UniProtKB-KW"/>
</dbReference>
<dbReference type="GO" id="GO:0006260">
    <property type="term" value="P:DNA replication"/>
    <property type="evidence" value="ECO:0007669"/>
    <property type="project" value="UniProtKB-KW"/>
</dbReference>
<dbReference type="CDD" id="cd17748">
    <property type="entry name" value="BRCT_DNA_ligase_like"/>
    <property type="match status" value="1"/>
</dbReference>
<dbReference type="CDD" id="cd00114">
    <property type="entry name" value="LIGANc"/>
    <property type="match status" value="1"/>
</dbReference>
<dbReference type="FunFam" id="1.10.150.20:FF:000006">
    <property type="entry name" value="DNA ligase"/>
    <property type="match status" value="1"/>
</dbReference>
<dbReference type="FunFam" id="1.10.150.20:FF:000007">
    <property type="entry name" value="DNA ligase"/>
    <property type="match status" value="1"/>
</dbReference>
<dbReference type="FunFam" id="1.10.287.610:FF:000002">
    <property type="entry name" value="DNA ligase"/>
    <property type="match status" value="1"/>
</dbReference>
<dbReference type="FunFam" id="2.40.50.140:FF:000012">
    <property type="entry name" value="DNA ligase"/>
    <property type="match status" value="1"/>
</dbReference>
<dbReference type="FunFam" id="3.30.470.30:FF:000001">
    <property type="entry name" value="DNA ligase"/>
    <property type="match status" value="1"/>
</dbReference>
<dbReference type="Gene3D" id="6.20.10.30">
    <property type="match status" value="1"/>
</dbReference>
<dbReference type="Gene3D" id="1.10.150.20">
    <property type="entry name" value="5' to 3' exonuclease, C-terminal subdomain"/>
    <property type="match status" value="2"/>
</dbReference>
<dbReference type="Gene3D" id="3.40.50.10190">
    <property type="entry name" value="BRCT domain"/>
    <property type="match status" value="1"/>
</dbReference>
<dbReference type="Gene3D" id="3.30.470.30">
    <property type="entry name" value="DNA ligase/mRNA capping enzyme"/>
    <property type="match status" value="1"/>
</dbReference>
<dbReference type="Gene3D" id="1.10.287.610">
    <property type="entry name" value="Helix hairpin bin"/>
    <property type="match status" value="1"/>
</dbReference>
<dbReference type="Gene3D" id="2.40.50.140">
    <property type="entry name" value="Nucleic acid-binding proteins"/>
    <property type="match status" value="1"/>
</dbReference>
<dbReference type="HAMAP" id="MF_01588">
    <property type="entry name" value="DNA_ligase_A"/>
    <property type="match status" value="1"/>
</dbReference>
<dbReference type="InterPro" id="IPR001357">
    <property type="entry name" value="BRCT_dom"/>
</dbReference>
<dbReference type="InterPro" id="IPR036420">
    <property type="entry name" value="BRCT_dom_sf"/>
</dbReference>
<dbReference type="InterPro" id="IPR041663">
    <property type="entry name" value="DisA/LigA_HHH"/>
</dbReference>
<dbReference type="InterPro" id="IPR001679">
    <property type="entry name" value="DNA_ligase"/>
</dbReference>
<dbReference type="InterPro" id="IPR018239">
    <property type="entry name" value="DNA_ligase_AS"/>
</dbReference>
<dbReference type="InterPro" id="IPR033136">
    <property type="entry name" value="DNA_ligase_CS"/>
</dbReference>
<dbReference type="InterPro" id="IPR013839">
    <property type="entry name" value="DNAligase_adenylation"/>
</dbReference>
<dbReference type="InterPro" id="IPR013840">
    <property type="entry name" value="DNAligase_N"/>
</dbReference>
<dbReference type="InterPro" id="IPR003583">
    <property type="entry name" value="Hlx-hairpin-Hlx_DNA-bd_motif"/>
</dbReference>
<dbReference type="InterPro" id="IPR012340">
    <property type="entry name" value="NA-bd_OB-fold"/>
</dbReference>
<dbReference type="InterPro" id="IPR004150">
    <property type="entry name" value="NAD_DNA_ligase_OB"/>
</dbReference>
<dbReference type="InterPro" id="IPR010994">
    <property type="entry name" value="RuvA_2-like"/>
</dbReference>
<dbReference type="InterPro" id="IPR004149">
    <property type="entry name" value="Znf_DNAligase_C4"/>
</dbReference>
<dbReference type="NCBIfam" id="TIGR00575">
    <property type="entry name" value="dnlj"/>
    <property type="match status" value="1"/>
</dbReference>
<dbReference type="NCBIfam" id="NF005932">
    <property type="entry name" value="PRK07956.1"/>
    <property type="match status" value="1"/>
</dbReference>
<dbReference type="PANTHER" id="PTHR23389">
    <property type="entry name" value="CHROMOSOME TRANSMISSION FIDELITY FACTOR 18"/>
    <property type="match status" value="1"/>
</dbReference>
<dbReference type="PANTHER" id="PTHR23389:SF6">
    <property type="entry name" value="REPLICATION FACTOR C SUBUNIT 1"/>
    <property type="match status" value="1"/>
</dbReference>
<dbReference type="Pfam" id="PF00533">
    <property type="entry name" value="BRCT"/>
    <property type="match status" value="1"/>
</dbReference>
<dbReference type="Pfam" id="PF01653">
    <property type="entry name" value="DNA_ligase_aden"/>
    <property type="match status" value="1"/>
</dbReference>
<dbReference type="Pfam" id="PF03120">
    <property type="entry name" value="DNA_ligase_OB"/>
    <property type="match status" value="1"/>
</dbReference>
<dbReference type="Pfam" id="PF03119">
    <property type="entry name" value="DNA_ligase_ZBD"/>
    <property type="match status" value="1"/>
</dbReference>
<dbReference type="Pfam" id="PF12826">
    <property type="entry name" value="HHH_2"/>
    <property type="match status" value="1"/>
</dbReference>
<dbReference type="Pfam" id="PF14520">
    <property type="entry name" value="HHH_5"/>
    <property type="match status" value="1"/>
</dbReference>
<dbReference type="Pfam" id="PF22745">
    <property type="entry name" value="Nlig-Ia"/>
    <property type="match status" value="1"/>
</dbReference>
<dbReference type="PIRSF" id="PIRSF001604">
    <property type="entry name" value="LigA"/>
    <property type="match status" value="1"/>
</dbReference>
<dbReference type="SMART" id="SM00292">
    <property type="entry name" value="BRCT"/>
    <property type="match status" value="1"/>
</dbReference>
<dbReference type="SMART" id="SM00278">
    <property type="entry name" value="HhH1"/>
    <property type="match status" value="3"/>
</dbReference>
<dbReference type="SMART" id="SM00532">
    <property type="entry name" value="LIGANc"/>
    <property type="match status" value="1"/>
</dbReference>
<dbReference type="SUPFAM" id="SSF52113">
    <property type="entry name" value="BRCT domain"/>
    <property type="match status" value="1"/>
</dbReference>
<dbReference type="SUPFAM" id="SSF56091">
    <property type="entry name" value="DNA ligase/mRNA capping enzyme, catalytic domain"/>
    <property type="match status" value="1"/>
</dbReference>
<dbReference type="SUPFAM" id="SSF50249">
    <property type="entry name" value="Nucleic acid-binding proteins"/>
    <property type="match status" value="1"/>
</dbReference>
<dbReference type="SUPFAM" id="SSF47781">
    <property type="entry name" value="RuvA domain 2-like"/>
    <property type="match status" value="1"/>
</dbReference>
<dbReference type="PROSITE" id="PS50172">
    <property type="entry name" value="BRCT"/>
    <property type="match status" value="1"/>
</dbReference>
<dbReference type="PROSITE" id="PS01055">
    <property type="entry name" value="DNA_LIGASE_N1"/>
    <property type="match status" value="1"/>
</dbReference>
<dbReference type="PROSITE" id="PS01056">
    <property type="entry name" value="DNA_LIGASE_N2"/>
    <property type="match status" value="1"/>
</dbReference>
<keyword id="KW-0227">DNA damage</keyword>
<keyword id="KW-0234">DNA repair</keyword>
<keyword id="KW-0235">DNA replication</keyword>
<keyword id="KW-0436">Ligase</keyword>
<keyword id="KW-0460">Magnesium</keyword>
<keyword id="KW-0464">Manganese</keyword>
<keyword id="KW-0479">Metal-binding</keyword>
<keyword id="KW-0520">NAD</keyword>
<keyword id="KW-1185">Reference proteome</keyword>
<keyword id="KW-0862">Zinc</keyword>
<sequence length="665" mass="75663">MDKKKFKEEIEKLREEIEYHNYRYYVLADPVISDEEYDKLLKKLIELEKKYPEFYSPTSPTQKVGGKVLDGFKKVMHSIPMLSLDNTYNEEEIKEFDERIKKLLGVNEVEYVCELKIDGISVALRYENGQFVTALSRGDGIEGEDISENVKKIKSIPLRLFKNLTIEVRGEIFMPVKEFEKYNKIAEEEGLQPFANPRNATAGTIRQLDSSIVAKRNLDSFIYYVVNPEIYGLKTQWEALKFLKEIGFKTNPYSRLCHDVNCVIDFWKEMTKKRTQLDYWIDGLVIKVNNFEYQRKLGETAKAPRWAIAFKFPSIKAESKILNIELNVGRTGVITPVAVLEPINLEGSIVKRASLHNFDYIKEKDIRIGDHVYVEKAGGIIPQIVSVIKEKRTGKELEIEIPKSCPICGGKVGKISEEEVAIRCLNPHCPQKLKRHMEIFVSKSAFNISGLGEKIVEKIVDARLINDVADIFYLTPFDLAQISGLGQKSIANILEQIEKAKNTPLYRVIIGLGIPLVGEKTAKILADKFKSIKALSQASYDELTSIEGIGPEVAKNIIEYFKNEKTKEIIRKLENAGVKLEQEEDTKKSSKLAGLTFVITGKFNSFTREEVKEIIEKLGGKVTNTVSSKTDYLLVGEKPGSKYQKALELGVKIINEDEFKKMIID</sequence>
<feature type="chain" id="PRO_0000380492" description="DNA ligase">
    <location>
        <begin position="1"/>
        <end position="665"/>
    </location>
</feature>
<feature type="domain" description="BRCT" evidence="1">
    <location>
        <begin position="587"/>
        <end position="665"/>
    </location>
</feature>
<feature type="active site" description="N6-AMP-lysine intermediate" evidence="1">
    <location>
        <position position="116"/>
    </location>
</feature>
<feature type="binding site" evidence="1">
    <location>
        <begin position="34"/>
        <end position="38"/>
    </location>
    <ligand>
        <name>NAD(+)</name>
        <dbReference type="ChEBI" id="CHEBI:57540"/>
    </ligand>
</feature>
<feature type="binding site" evidence="1">
    <location>
        <begin position="83"/>
        <end position="84"/>
    </location>
    <ligand>
        <name>NAD(+)</name>
        <dbReference type="ChEBI" id="CHEBI:57540"/>
    </ligand>
</feature>
<feature type="binding site" evidence="1">
    <location>
        <position position="114"/>
    </location>
    <ligand>
        <name>NAD(+)</name>
        <dbReference type="ChEBI" id="CHEBI:57540"/>
    </ligand>
</feature>
<feature type="binding site" evidence="1">
    <location>
        <position position="137"/>
    </location>
    <ligand>
        <name>NAD(+)</name>
        <dbReference type="ChEBI" id="CHEBI:57540"/>
    </ligand>
</feature>
<feature type="binding site" evidence="1">
    <location>
        <position position="171"/>
    </location>
    <ligand>
        <name>NAD(+)</name>
        <dbReference type="ChEBI" id="CHEBI:57540"/>
    </ligand>
</feature>
<feature type="binding site" evidence="1">
    <location>
        <position position="287"/>
    </location>
    <ligand>
        <name>NAD(+)</name>
        <dbReference type="ChEBI" id="CHEBI:57540"/>
    </ligand>
</feature>
<feature type="binding site" evidence="1">
    <location>
        <position position="311"/>
    </location>
    <ligand>
        <name>NAD(+)</name>
        <dbReference type="ChEBI" id="CHEBI:57540"/>
    </ligand>
</feature>
<feature type="binding site" evidence="1">
    <location>
        <position position="405"/>
    </location>
    <ligand>
        <name>Zn(2+)</name>
        <dbReference type="ChEBI" id="CHEBI:29105"/>
    </ligand>
</feature>
<feature type="binding site" evidence="1">
    <location>
        <position position="408"/>
    </location>
    <ligand>
        <name>Zn(2+)</name>
        <dbReference type="ChEBI" id="CHEBI:29105"/>
    </ligand>
</feature>
<feature type="binding site" evidence="1">
    <location>
        <position position="424"/>
    </location>
    <ligand>
        <name>Zn(2+)</name>
        <dbReference type="ChEBI" id="CHEBI:29105"/>
    </ligand>
</feature>
<feature type="binding site" evidence="1">
    <location>
        <position position="429"/>
    </location>
    <ligand>
        <name>Zn(2+)</name>
        <dbReference type="ChEBI" id="CHEBI:29105"/>
    </ligand>
</feature>
<comment type="function">
    <text evidence="1">DNA ligase that catalyzes the formation of phosphodiester linkages between 5'-phosphoryl and 3'-hydroxyl groups in double-stranded DNA using NAD as a coenzyme and as the energy source for the reaction. It is essential for DNA replication and repair of damaged DNA.</text>
</comment>
<comment type="catalytic activity">
    <reaction evidence="1">
        <text>NAD(+) + (deoxyribonucleotide)n-3'-hydroxyl + 5'-phospho-(deoxyribonucleotide)m = (deoxyribonucleotide)n+m + AMP + beta-nicotinamide D-nucleotide.</text>
        <dbReference type="EC" id="6.5.1.2"/>
    </reaction>
</comment>
<comment type="cofactor">
    <cofactor evidence="1">
        <name>Mg(2+)</name>
        <dbReference type="ChEBI" id="CHEBI:18420"/>
    </cofactor>
    <cofactor evidence="1">
        <name>Mn(2+)</name>
        <dbReference type="ChEBI" id="CHEBI:29035"/>
    </cofactor>
</comment>
<comment type="similarity">
    <text evidence="1">Belongs to the NAD-dependent DNA ligase family. LigA subfamily.</text>
</comment>
<proteinExistence type="inferred from homology"/>
<evidence type="ECO:0000255" key="1">
    <source>
        <dbReference type="HAMAP-Rule" id="MF_01588"/>
    </source>
</evidence>
<accession>B7IDX6</accession>
<protein>
    <recommendedName>
        <fullName evidence="1">DNA ligase</fullName>
        <ecNumber evidence="1">6.5.1.2</ecNumber>
    </recommendedName>
    <alternativeName>
        <fullName evidence="1">Polydeoxyribonucleotide synthase [NAD(+)]</fullName>
    </alternativeName>
</protein>